<protein>
    <recommendedName>
        <fullName>Golgi SNAP receptor complex member 1</fullName>
    </recommendedName>
    <alternativeName>
        <fullName>28 kDa Golgi SNARE protein</fullName>
    </alternativeName>
    <alternativeName>
        <fullName>28 kDa cis-Golgi SNARE p28</fullName>
        <shortName>GOS-28</shortName>
        <shortName>GOS28</shortName>
    </alternativeName>
</protein>
<comment type="function">
    <text evidence="10 13 14">Involved in transport from the ER to the Golgi apparatus as well as in intra-Golgi transport. It belongs to a super-family of proteins called t-SNAREs or soluble NSF (N-ethylmaleimide-sensitive factor) attachment protein receptor. May play a protective role against hydrogen peroxide induced cytotoxicity under glutathione depleted conditions in neuronal cells by regulating the intracellular ROS levels via inhibition of p38 MAPK (MAPK11, MAPK12, MAPK13 and MAPK14). Participates in docking and fusion stage of ER to cis-Golgi transport. Plays an important physiological role in VLDL-transport vesicle-Golgi fusion and thus in VLDL delivery to the hepatic cis-Golgi.</text>
</comment>
<comment type="subunit">
    <text evidence="5 6 8 9 11 13 15 16 17">Component of several multiprotein Golgi SNARE complexes. Identified in a SNARE complex with BET1, STX5 and YKT6, in a SNARE complex with BET1L, STX5 and YKT6, in a SNARE complex with STX5, GOSR2, SEC22B and BET1, and in complex with STX5 and COG3. Interacts with GABARAPL2. Interacts with the 34 kDa STX5 isoform.</text>
</comment>
<comment type="interaction">
    <interactant intactId="EBI-7837133">
        <id>Q62931</id>
    </interactant>
    <interactant intactId="EBI-2028244">
        <id>Q08851</id>
        <label>Stx5</label>
    </interactant>
    <organismsDiffer>false</organismsDiffer>
    <experiments>15</experiments>
</comment>
<comment type="interaction">
    <interactant intactId="EBI-7837133">
        <id>Q62931</id>
    </interactant>
    <interactant intactId="EBI-4423297">
        <id>P41542</id>
        <label>Uso1</label>
    </interactant>
    <organismsDiffer>false</organismsDiffer>
    <experiments>10</experiments>
</comment>
<comment type="subcellular location">
    <subcellularLocation>
        <location evidence="4 5 6 7 8 9 10 12 13 16 17">Golgi apparatus membrane</location>
        <topology evidence="4 5 6 7 8 9 10 12 13 16 17">Single-pass type IV membrane protein</topology>
    </subcellularLocation>
    <text>Localizes throughout the Golgi apparatus, with lowest levels in the trans-Golgi network. Enriched on vesicular components at the terminal rims of the Golgi apparatus.</text>
</comment>
<comment type="similarity">
    <text evidence="18">Belongs to the GOSR1 family.</text>
</comment>
<feature type="initiator methionine" description="Removed" evidence="1">
    <location>
        <position position="1"/>
    </location>
</feature>
<feature type="chain" id="PRO_0000212545" description="Golgi SNAP receptor complex member 1">
    <location>
        <begin position="2"/>
        <end position="250"/>
    </location>
</feature>
<feature type="topological domain" description="Cytoplasmic" evidence="2">
    <location>
        <begin position="2"/>
        <end position="229"/>
    </location>
</feature>
<feature type="transmembrane region" description="Helical; Anchor for type IV membrane protein" evidence="2">
    <location>
        <begin position="230"/>
        <end position="250"/>
    </location>
</feature>
<feature type="region of interest" description="Disordered" evidence="3">
    <location>
        <begin position="37"/>
        <end position="59"/>
    </location>
</feature>
<feature type="coiled-coil region" evidence="2">
    <location>
        <begin position="9"/>
        <end position="30"/>
    </location>
</feature>
<feature type="coiled-coil region" evidence="2">
    <location>
        <begin position="68"/>
        <end position="95"/>
    </location>
</feature>
<feature type="compositionally biased region" description="Basic and acidic residues" evidence="3">
    <location>
        <begin position="41"/>
        <end position="51"/>
    </location>
</feature>
<feature type="modified residue" description="N-acetylalanine" evidence="1">
    <location>
        <position position="2"/>
    </location>
</feature>
<feature type="modified residue" description="Phosphoserine" evidence="1">
    <location>
        <position position="141"/>
    </location>
</feature>
<dbReference type="EMBL" id="U49099">
    <property type="protein sequence ID" value="AAC52597.1"/>
    <property type="molecule type" value="mRNA"/>
</dbReference>
<dbReference type="EMBL" id="BC126068">
    <property type="protein sequence ID" value="AAI26069.1"/>
    <property type="molecule type" value="mRNA"/>
</dbReference>
<dbReference type="RefSeq" id="NP_446036.1">
    <property type="nucleotide sequence ID" value="NM_053584.2"/>
</dbReference>
<dbReference type="SMR" id="Q62931"/>
<dbReference type="CORUM" id="Q62931"/>
<dbReference type="FunCoup" id="Q62931">
    <property type="interactions" value="3857"/>
</dbReference>
<dbReference type="IntAct" id="Q62931">
    <property type="interactions" value="7"/>
</dbReference>
<dbReference type="MINT" id="Q62931"/>
<dbReference type="STRING" id="10116.ENSRNOP00000068434"/>
<dbReference type="iPTMnet" id="Q62931"/>
<dbReference type="PhosphoSitePlus" id="Q62931"/>
<dbReference type="jPOST" id="Q62931"/>
<dbReference type="PaxDb" id="10116-ENSRNOP00000068434"/>
<dbReference type="Ensembl" id="ENSRNOT00000077038.2">
    <property type="protein sequence ID" value="ENSRNOP00000090076.1"/>
    <property type="gene ID" value="ENSRNOG00000070896.1"/>
</dbReference>
<dbReference type="GeneID" id="94189"/>
<dbReference type="KEGG" id="rno:94189"/>
<dbReference type="AGR" id="RGD:71093"/>
<dbReference type="CTD" id="9527"/>
<dbReference type="RGD" id="71093">
    <property type="gene designation" value="Gosr1"/>
</dbReference>
<dbReference type="VEuPathDB" id="HostDB:ENSRNOG00000003971"/>
<dbReference type="eggNOG" id="KOG3208">
    <property type="taxonomic scope" value="Eukaryota"/>
</dbReference>
<dbReference type="GeneTree" id="ENSGT00390000008688"/>
<dbReference type="HOGENOM" id="CLU_078034_0_0_1"/>
<dbReference type="InParanoid" id="Q62931"/>
<dbReference type="OrthoDB" id="38698at9989"/>
<dbReference type="PhylomeDB" id="Q62931"/>
<dbReference type="TreeFam" id="TF105782"/>
<dbReference type="Reactome" id="R-RNO-6807878">
    <property type="pathway name" value="COPI-mediated anterograde transport"/>
</dbReference>
<dbReference type="Reactome" id="R-RNO-6811438">
    <property type="pathway name" value="Intra-Golgi traffic"/>
</dbReference>
<dbReference type="PRO" id="PR:Q62931"/>
<dbReference type="Proteomes" id="UP000002494">
    <property type="component" value="Chromosome 10"/>
</dbReference>
<dbReference type="Bgee" id="ENSRNOG00000003971">
    <property type="expression patterns" value="Expressed in jejunum and 20 other cell types or tissues"/>
</dbReference>
<dbReference type="GO" id="GO:0005801">
    <property type="term" value="C:cis-Golgi network"/>
    <property type="evidence" value="ECO:0007669"/>
    <property type="project" value="InterPro"/>
</dbReference>
<dbReference type="GO" id="GO:0005829">
    <property type="term" value="C:cytosol"/>
    <property type="evidence" value="ECO:0007669"/>
    <property type="project" value="GOC"/>
</dbReference>
<dbReference type="GO" id="GO:0005794">
    <property type="term" value="C:Golgi apparatus"/>
    <property type="evidence" value="ECO:0000314"/>
    <property type="project" value="MGI"/>
</dbReference>
<dbReference type="GO" id="GO:0005797">
    <property type="term" value="C:Golgi medial cisterna"/>
    <property type="evidence" value="ECO:0000318"/>
    <property type="project" value="GO_Central"/>
</dbReference>
<dbReference type="GO" id="GO:0000139">
    <property type="term" value="C:Golgi membrane"/>
    <property type="evidence" value="ECO:0000266"/>
    <property type="project" value="RGD"/>
</dbReference>
<dbReference type="GO" id="GO:0016020">
    <property type="term" value="C:membrane"/>
    <property type="evidence" value="ECO:0000314"/>
    <property type="project" value="MGI"/>
</dbReference>
<dbReference type="GO" id="GO:0031201">
    <property type="term" value="C:SNARE complex"/>
    <property type="evidence" value="ECO:0000318"/>
    <property type="project" value="GO_Central"/>
</dbReference>
<dbReference type="GO" id="GO:0005484">
    <property type="term" value="F:SNAP receptor activity"/>
    <property type="evidence" value="ECO:0000266"/>
    <property type="project" value="RGD"/>
</dbReference>
<dbReference type="GO" id="GO:0006888">
    <property type="term" value="P:endoplasmic reticulum to Golgi vesicle-mediated transport"/>
    <property type="evidence" value="ECO:0000314"/>
    <property type="project" value="MGI"/>
</dbReference>
<dbReference type="GO" id="GO:0048219">
    <property type="term" value="P:inter-Golgi cisterna vesicle-mediated transport"/>
    <property type="evidence" value="ECO:0000318"/>
    <property type="project" value="GO_Central"/>
</dbReference>
<dbReference type="GO" id="GO:0015031">
    <property type="term" value="P:protein transport"/>
    <property type="evidence" value="ECO:0007669"/>
    <property type="project" value="UniProtKB-KW"/>
</dbReference>
<dbReference type="GO" id="GO:0042147">
    <property type="term" value="P:retrograde transport, endosome to Golgi"/>
    <property type="evidence" value="ECO:0000266"/>
    <property type="project" value="RGD"/>
</dbReference>
<dbReference type="GO" id="GO:0006906">
    <property type="term" value="P:vesicle fusion"/>
    <property type="evidence" value="ECO:0000318"/>
    <property type="project" value="GO_Central"/>
</dbReference>
<dbReference type="CDD" id="cd15864">
    <property type="entry name" value="SNARE_GS28"/>
    <property type="match status" value="1"/>
</dbReference>
<dbReference type="InterPro" id="IPR023601">
    <property type="entry name" value="Golgi_SNAP_su1"/>
</dbReference>
<dbReference type="PANTHER" id="PTHR21094:SF2">
    <property type="entry name" value="GOLGI SNAP RECEPTOR COMPLEX MEMBER 1"/>
    <property type="match status" value="1"/>
</dbReference>
<dbReference type="PANTHER" id="PTHR21094">
    <property type="entry name" value="GOS-28 SNARE- RELATED"/>
    <property type="match status" value="1"/>
</dbReference>
<dbReference type="Pfam" id="PF12352">
    <property type="entry name" value="V-SNARE_C"/>
    <property type="match status" value="1"/>
</dbReference>
<dbReference type="PIRSF" id="PIRSF027109">
    <property type="entry name" value="Golgi_SNARE"/>
    <property type="match status" value="1"/>
</dbReference>
<reference key="1">
    <citation type="journal article" date="1996" name="Science">
        <title>GS28, a 28-kilodalton Golgi SNARE that participates in ER-Golgi transport.</title>
        <authorList>
            <person name="Subramaniam V.N."/>
            <person name="Peter F."/>
            <person name="Philip R."/>
            <person name="Wong S.H."/>
            <person name="Hong W."/>
        </authorList>
    </citation>
    <scope>NUCLEOTIDE SEQUENCE [MRNA]</scope>
    <scope>PROTEIN SEQUENCE OF 18-25; 50-53; 76-86; 113-121; 127-133; 145-149; 160-165; 176-187 AND 212-225</scope>
    <scope>FUNCTION</scope>
    <source>
        <tissue>Brain</tissue>
    </source>
</reference>
<reference key="2">
    <citation type="journal article" date="2004" name="Genome Res.">
        <title>The status, quality, and expansion of the NIH full-length cDNA project: the Mammalian Gene Collection (MGC).</title>
        <authorList>
            <consortium name="The MGC Project Team"/>
        </authorList>
    </citation>
    <scope>NUCLEOTIDE SEQUENCE [LARGE SCALE MRNA]</scope>
    <source>
        <tissue>Thymus</tissue>
    </source>
</reference>
<reference key="3">
    <citation type="journal article" date="1997" name="Cell">
        <title>Protein interactions regulating vesicle transport between the endoplasmic reticulum and Golgi apparatus in mammalian cells.</title>
        <authorList>
            <person name="Hay J.C."/>
            <person name="Chao D.S."/>
            <person name="Kuo C.S."/>
            <person name="Scheller R.H."/>
        </authorList>
    </citation>
    <scope>PROTEIN SEQUENCE OF 18-26 AND 66-80</scope>
    <scope>SUBUNIT</scope>
    <scope>INTERACTION WITH STX5</scope>
    <source>
        <strain>Sprague-Dawley</strain>
        <tissue>Liver</tissue>
    </source>
</reference>
<reference key="4">
    <citation type="journal article" date="1997" name="J. Cell Biol.">
        <title>The mammalian protein (rbet1) homologous to yeast Bet1p is primarily associated with the pre-Golgi intermediate compartment and is involved in vesicular transport from the endoplasmic reticulum to the Golgi apparatus.</title>
        <authorList>
            <person name="Zhang T."/>
            <person name="Wong S.H."/>
            <person name="Tang B.L."/>
            <person name="Xu Y."/>
            <person name="Peter F."/>
            <person name="Subramaniam V.N."/>
            <person name="Hong W."/>
        </authorList>
    </citation>
    <scope>INTERACTION WITH BET1 AND STX5</scope>
    <scope>SUBCELLULAR LOCATION</scope>
</reference>
<reference key="5">
    <citation type="journal article" date="1998" name="J. Cell Biol.">
        <title>Localization, dynamics, and protein interactions reveal distinct roles for ER and Golgi SNAREs.</title>
        <authorList>
            <person name="Hay J.C."/>
            <person name="Klumperman J."/>
            <person name="Oorschot V."/>
            <person name="Steegmaier M."/>
            <person name="Kuo C.S."/>
            <person name="Scheller R.H."/>
        </authorList>
    </citation>
    <scope>INTERACTION WITH STX5</scope>
    <scope>SUBCELLULAR LOCATION</scope>
</reference>
<reference key="6">
    <citation type="journal article" date="1999" name="Anal. Biochem.">
        <title>Separation of the intracellular secretory compartment of rat liver and isolated rat hepatocytes in a single step using self-generating gradients of iodixanol.</title>
        <authorList>
            <person name="Plonne D."/>
            <person name="Cartwright I."/>
            <person name="Linss W."/>
            <person name="Dargel R."/>
            <person name="Graham J.M."/>
            <person name="Higgins J.A."/>
        </authorList>
    </citation>
    <scope>SUBCELLULAR LOCATION</scope>
</reference>
<reference key="7">
    <citation type="journal article" date="2000" name="EMBO J.">
        <title>GATE-16, a membrane transport modulator, interacts with NSF and the Golgi v-SNARE GOS-28.</title>
        <authorList>
            <person name="Sagiv Y."/>
            <person name="Legesse-Miller A."/>
            <person name="Porat A."/>
            <person name="Elazar Z."/>
        </authorList>
    </citation>
    <scope>INTERACTION WITH GABARAPL2</scope>
    <scope>SUBCELLULAR LOCATION</scope>
</reference>
<reference key="8">
    <citation type="journal article" date="2001" name="J. Biol. Chem.">
        <title>Ykt6 forms a SNARE complex with syntaxin 5, GS28, and Bet1 and participates in a late stage in endoplasmic reticulum-Golgi transport.</title>
        <authorList>
            <person name="Zhang T."/>
            <person name="Hong W."/>
        </authorList>
    </citation>
    <scope>INTERACTION WITH YKT6; BET1 AND STX5</scope>
    <scope>SUBCELLULAR LOCATION</scope>
</reference>
<reference key="9">
    <citation type="journal article" date="2001" name="J. Cell Biol.">
        <title>Sorting of Golgi resident proteins into different subpopulations of COPI vesicles: a role for ArfGAP1.</title>
        <authorList>
            <person name="Lanoix J."/>
            <person name="Ouwendijk J."/>
            <person name="Stark A."/>
            <person name="Szafer E."/>
            <person name="Cassel D."/>
            <person name="Dejgaard K."/>
            <person name="Weiss M."/>
            <person name="Nilsson T."/>
        </authorList>
    </citation>
    <scope>SUBCELLULAR LOCATION</scope>
</reference>
<reference key="10">
    <citation type="journal article" date="2002" name="J. Cell Biol.">
        <title>Sequential tethering of Golgins and catalysis of SNAREpin assembly by the vesicle-tethering protein p115.</title>
        <authorList>
            <person name="Shorter J."/>
            <person name="Beard M.B."/>
            <person name="Seemann J."/>
            <person name="Dirac-Svejstrup A.B."/>
            <person name="Warren G."/>
        </authorList>
    </citation>
    <scope>SUBUNIT</scope>
    <scope>SUBCELLULAR LOCATION</scope>
</reference>
<reference key="11">
    <citation type="journal article" date="2002" name="Mol. Biol. Cell">
        <title>GS15 forms a SNARE complex with syntaxin 5, GS28, and Ykt6 and is implicated in traffic in the early cisternae of the Golgi apparatus.</title>
        <authorList>
            <person name="Xu Y."/>
            <person name="Martin S."/>
            <person name="James D.E."/>
            <person name="Hong W."/>
        </authorList>
    </citation>
    <scope>INTERACTION WITH BET1L; STX5 AND YTK6</scope>
    <scope>SUBCELLULAR LOCATION</scope>
</reference>
<reference key="12">
    <citation type="journal article" date="2004" name="Mol. Biol. Cell">
        <title>Countercurrent distribution of two distinct SNARE complexes mediating transport within the Golgi stack.</title>
        <authorList>
            <person name="Volchuk A."/>
            <person name="Ravazzola M."/>
            <person name="Perrelet A."/>
            <person name="Eng W.S."/>
            <person name="Di Liberto M."/>
            <person name="Varlamov O."/>
            <person name="Fukasawa M."/>
            <person name="Engel T."/>
            <person name="Sollner T.H."/>
            <person name="Rothman J.E."/>
            <person name="Orci L."/>
        </authorList>
    </citation>
    <scope>SUBCELLULAR LOCATION</scope>
    <scope>FUNCTION</scope>
</reference>
<reference key="13">
    <citation type="journal article" date="2005" name="J. Cell Biol.">
        <title>Cog3p depletion blocks vesicle-mediated Golgi retrograde trafficking in HeLa cells.</title>
        <authorList>
            <person name="Zolov S.N."/>
            <person name="Lupashin V.V."/>
        </authorList>
    </citation>
    <scope>INTERACTION WITH BET1L AND COG3</scope>
</reference>
<reference key="14">
    <citation type="journal article" date="2008" name="Histochem. Cell Biol.">
        <title>Heterotypic tubular connections at the endoplasmic reticulum-Golgi complex interface.</title>
        <authorList>
            <person name="Vivero-Salmeron G."/>
            <person name="Ballesta J."/>
            <person name="Martinez-Menarguez J.A."/>
        </authorList>
    </citation>
    <scope>SUBCELLULAR LOCATION</scope>
</reference>
<reference key="15">
    <citation type="journal article" date="2010" name="Biochem. J.">
        <title>The identification of the SNARE complex required for the fusion of VLDL-transport vesicle with hepatic cis-Golgi.</title>
        <authorList>
            <person name="Siddiqi S."/>
            <person name="Mani A.M."/>
            <person name="Siddiqi S.A."/>
        </authorList>
    </citation>
    <scope>FUNCTION</scope>
    <scope>SUBUNIT</scope>
    <scope>INTERACTION WITH SEC22B</scope>
    <scope>SUBCELLULAR LOCATION</scope>
</reference>
<accession>Q62931</accession>
<accession>A0JN01</accession>
<gene>
    <name type="primary">Gosr1</name>
    <name type="synonym">Gs28</name>
</gene>
<sequence>MAAGTSNYWEDLRKQARQLENELDLKLVSFSKLCTSYSHSSARDGGRDRYSSDTTPLLNGSSQDRMFETMAIEIEQLLARLTGVNDKMAEYTHSAGVPSLNAALMHTLQRHRDILQDYTHEFHKTKANFMAIRERENLMGSVRKDIESYKSGSGVNNRRTELFLKEHDHLRNSDRLIEETISIAMATKENMTSQRGMLKSIHSKMNTLANRFPAVNSLIQRINLRKRRDSLILGGVIGICTILLLLYAFH</sequence>
<organism>
    <name type="scientific">Rattus norvegicus</name>
    <name type="common">Rat</name>
    <dbReference type="NCBI Taxonomy" id="10116"/>
    <lineage>
        <taxon>Eukaryota</taxon>
        <taxon>Metazoa</taxon>
        <taxon>Chordata</taxon>
        <taxon>Craniata</taxon>
        <taxon>Vertebrata</taxon>
        <taxon>Euteleostomi</taxon>
        <taxon>Mammalia</taxon>
        <taxon>Eutheria</taxon>
        <taxon>Euarchontoglires</taxon>
        <taxon>Glires</taxon>
        <taxon>Rodentia</taxon>
        <taxon>Myomorpha</taxon>
        <taxon>Muroidea</taxon>
        <taxon>Muridae</taxon>
        <taxon>Murinae</taxon>
        <taxon>Rattus</taxon>
    </lineage>
</organism>
<proteinExistence type="evidence at protein level"/>
<evidence type="ECO:0000250" key="1">
    <source>
        <dbReference type="UniProtKB" id="O95249"/>
    </source>
</evidence>
<evidence type="ECO:0000255" key="2"/>
<evidence type="ECO:0000256" key="3">
    <source>
        <dbReference type="SAM" id="MobiDB-lite"/>
    </source>
</evidence>
<evidence type="ECO:0000269" key="4">
    <source>
    </source>
</evidence>
<evidence type="ECO:0000269" key="5">
    <source>
    </source>
</evidence>
<evidence type="ECO:0000269" key="6">
    <source>
    </source>
</evidence>
<evidence type="ECO:0000269" key="7">
    <source>
    </source>
</evidence>
<evidence type="ECO:0000269" key="8">
    <source>
    </source>
</evidence>
<evidence type="ECO:0000269" key="9">
    <source>
    </source>
</evidence>
<evidence type="ECO:0000269" key="10">
    <source>
    </source>
</evidence>
<evidence type="ECO:0000269" key="11">
    <source>
    </source>
</evidence>
<evidence type="ECO:0000269" key="12">
    <source>
    </source>
</evidence>
<evidence type="ECO:0000269" key="13">
    <source>
    </source>
</evidence>
<evidence type="ECO:0000269" key="14">
    <source>
    </source>
</evidence>
<evidence type="ECO:0000269" key="15">
    <source>
    </source>
</evidence>
<evidence type="ECO:0000269" key="16">
    <source>
    </source>
</evidence>
<evidence type="ECO:0000269" key="17">
    <source>
    </source>
</evidence>
<evidence type="ECO:0000305" key="18"/>
<name>GOSR1_RAT</name>
<keyword id="KW-0007">Acetylation</keyword>
<keyword id="KW-0175">Coiled coil</keyword>
<keyword id="KW-0903">Direct protein sequencing</keyword>
<keyword id="KW-0931">ER-Golgi transport</keyword>
<keyword id="KW-0333">Golgi apparatus</keyword>
<keyword id="KW-0472">Membrane</keyword>
<keyword id="KW-0597">Phosphoprotein</keyword>
<keyword id="KW-0653">Protein transport</keyword>
<keyword id="KW-1185">Reference proteome</keyword>
<keyword id="KW-0812">Transmembrane</keyword>
<keyword id="KW-1133">Transmembrane helix</keyword>
<keyword id="KW-0813">Transport</keyword>